<comment type="function">
    <text evidence="1">Adapter protein able to interact with different proteins and involved in different biological processes. Mediates the interaction between the error-prone DNA polymerase zeta catalytic subunit rev3l and the inserter polymerase rev1, thereby mediating the second polymerase switching in translesion DNA synthesis. Translesion DNA synthesis releases the replication blockade of replicative polymerases, stalled in presence of DNA lesions. May also play a role in signal transduction in response to DNA damage. May regulate the activation of the anaphase promoting complex APC thereby regulating progression through the cell cycle. Through transcriptional regulation may play a role in epithelial-mesenchymal transdifferentiation (By similarity).</text>
</comment>
<comment type="subunit">
    <text evidence="1">Homooligomer. Interacts with rev1. Interacts with rev3l. Interacts with fzr1 (in complex with the anaphase promoting complex APC). May interact with cdc20 (By similarity).</text>
</comment>
<comment type="subcellular location">
    <subcellularLocation>
        <location evidence="1">Nucleus</location>
    </subcellularLocation>
    <subcellularLocation>
        <location evidence="1">Cytoplasm</location>
        <location evidence="1">Cytoskeleton</location>
        <location evidence="1">Spindle</location>
    </subcellularLocation>
    <subcellularLocation>
        <location evidence="1">Cytoplasm</location>
    </subcellularLocation>
</comment>
<name>MD2L2_XENTR</name>
<gene>
    <name type="primary">mad2l2</name>
    <name type="ORF">TEgg053p21.1</name>
</gene>
<feature type="chain" id="PRO_0000405248" description="Mitotic spindle assembly checkpoint protein MAD2B">
    <location>
        <begin position="1"/>
        <end position="211"/>
    </location>
</feature>
<feature type="domain" description="HORMA" evidence="2">
    <location>
        <begin position="13"/>
        <end position="203"/>
    </location>
</feature>
<dbReference type="EMBL" id="CR760993">
    <property type="protein sequence ID" value="CAJ82125.1"/>
    <property type="molecule type" value="mRNA"/>
</dbReference>
<dbReference type="RefSeq" id="NP_001231769.1">
    <property type="nucleotide sequence ID" value="NM_001244840.1"/>
</dbReference>
<dbReference type="RefSeq" id="NP_001231770.1">
    <property type="nucleotide sequence ID" value="NM_001244841.1"/>
</dbReference>
<dbReference type="RefSeq" id="NP_001231771.1">
    <property type="nucleotide sequence ID" value="NM_001244842.1"/>
</dbReference>
<dbReference type="RefSeq" id="XP_012821810.1">
    <property type="nucleotide sequence ID" value="XM_012966356.3"/>
</dbReference>
<dbReference type="SMR" id="Q28H85"/>
<dbReference type="FunCoup" id="Q28H85">
    <property type="interactions" value="1294"/>
</dbReference>
<dbReference type="STRING" id="8364.ENSXETP00000042109"/>
<dbReference type="PaxDb" id="8364-ENSXETP00000056411"/>
<dbReference type="DNASU" id="448122"/>
<dbReference type="GeneID" id="448122"/>
<dbReference type="KEGG" id="xtr:448122"/>
<dbReference type="AGR" id="Xenbase:XB-GENE-973653"/>
<dbReference type="CTD" id="10459"/>
<dbReference type="Xenbase" id="XB-GENE-973653">
    <property type="gene designation" value="mad2l2"/>
</dbReference>
<dbReference type="eggNOG" id="KOG3186">
    <property type="taxonomic scope" value="Eukaryota"/>
</dbReference>
<dbReference type="HOGENOM" id="CLU_050394_2_0_1"/>
<dbReference type="InParanoid" id="Q28H85"/>
<dbReference type="OrthoDB" id="21254at2759"/>
<dbReference type="TreeFam" id="TF101085"/>
<dbReference type="Reactome" id="R-XTR-110312">
    <property type="pathway name" value="Translesion synthesis by REV1"/>
</dbReference>
<dbReference type="Reactome" id="R-XTR-5655862">
    <property type="pathway name" value="Translesion synthesis by POLK"/>
</dbReference>
<dbReference type="Reactome" id="R-XTR-5656121">
    <property type="pathway name" value="Translesion synthesis by POLI"/>
</dbReference>
<dbReference type="Proteomes" id="UP000008143">
    <property type="component" value="Chromosome 7"/>
</dbReference>
<dbReference type="Bgee" id="ENSXETG00000013095">
    <property type="expression patterns" value="Expressed in egg cell and 17 other cell types or tissues"/>
</dbReference>
<dbReference type="ExpressionAtlas" id="Q28H85">
    <property type="expression patterns" value="baseline"/>
</dbReference>
<dbReference type="GO" id="GO:0005737">
    <property type="term" value="C:cytoplasm"/>
    <property type="evidence" value="ECO:0007669"/>
    <property type="project" value="UniProtKB-SubCell"/>
</dbReference>
<dbReference type="GO" id="GO:0005634">
    <property type="term" value="C:nucleus"/>
    <property type="evidence" value="ECO:0000250"/>
    <property type="project" value="UniProtKB"/>
</dbReference>
<dbReference type="GO" id="GO:0005819">
    <property type="term" value="C:spindle"/>
    <property type="evidence" value="ECO:0000250"/>
    <property type="project" value="UniProtKB"/>
</dbReference>
<dbReference type="GO" id="GO:0016035">
    <property type="term" value="C:zeta DNA polymerase complex"/>
    <property type="evidence" value="ECO:0000250"/>
    <property type="project" value="UniProtKB"/>
</dbReference>
<dbReference type="GO" id="GO:0051301">
    <property type="term" value="P:cell division"/>
    <property type="evidence" value="ECO:0007669"/>
    <property type="project" value="UniProtKB-KW"/>
</dbReference>
<dbReference type="GO" id="GO:0042772">
    <property type="term" value="P:DNA damage response, signal transduction resulting in transcription"/>
    <property type="evidence" value="ECO:0000250"/>
    <property type="project" value="UniProtKB"/>
</dbReference>
<dbReference type="GO" id="GO:0006302">
    <property type="term" value="P:double-strand break repair"/>
    <property type="evidence" value="ECO:0000250"/>
    <property type="project" value="UniProtKB"/>
</dbReference>
<dbReference type="GO" id="GO:0042177">
    <property type="term" value="P:negative regulation of protein catabolic process"/>
    <property type="evidence" value="ECO:0000250"/>
    <property type="project" value="UniProtKB"/>
</dbReference>
<dbReference type="GO" id="GO:1904667">
    <property type="term" value="P:negative regulation of ubiquitin protein ligase activity"/>
    <property type="evidence" value="ECO:0000250"/>
    <property type="project" value="UniProtKB"/>
</dbReference>
<dbReference type="GO" id="GO:0045893">
    <property type="term" value="P:positive regulation of DNA-templated transcription"/>
    <property type="evidence" value="ECO:0000250"/>
    <property type="project" value="UniProtKB"/>
</dbReference>
<dbReference type="GO" id="GO:0033138">
    <property type="term" value="P:positive regulation of peptidyl-serine phosphorylation"/>
    <property type="evidence" value="ECO:0000250"/>
    <property type="project" value="UniProtKB"/>
</dbReference>
<dbReference type="GO" id="GO:0001558">
    <property type="term" value="P:regulation of cell growth"/>
    <property type="evidence" value="ECO:0000250"/>
    <property type="project" value="UniProtKB"/>
</dbReference>
<dbReference type="FunFam" id="3.30.900.10:FF:000003">
    <property type="entry name" value="Mitotic spindle assembly checkpoint protein MAD2B"/>
    <property type="match status" value="1"/>
</dbReference>
<dbReference type="Gene3D" id="3.30.900.10">
    <property type="entry name" value="HORMA domain"/>
    <property type="match status" value="1"/>
</dbReference>
<dbReference type="InterPro" id="IPR003511">
    <property type="entry name" value="HORMA_dom"/>
</dbReference>
<dbReference type="InterPro" id="IPR036570">
    <property type="entry name" value="HORMA_dom_sf"/>
</dbReference>
<dbReference type="InterPro" id="IPR045091">
    <property type="entry name" value="Mad2-like"/>
</dbReference>
<dbReference type="PANTHER" id="PTHR11842">
    <property type="entry name" value="MITOTIC SPINDLE ASSEMBLY CHECKPOINT PROTEIN MAD2"/>
    <property type="match status" value="1"/>
</dbReference>
<dbReference type="PANTHER" id="PTHR11842:SF10">
    <property type="entry name" value="MITOTIC SPINDLE ASSEMBLY CHECKPOINT PROTEIN MAD2B"/>
    <property type="match status" value="1"/>
</dbReference>
<dbReference type="Pfam" id="PF02301">
    <property type="entry name" value="HORMA"/>
    <property type="match status" value="1"/>
</dbReference>
<dbReference type="SUPFAM" id="SSF56019">
    <property type="entry name" value="The spindle assembly checkpoint protein mad2"/>
    <property type="match status" value="1"/>
</dbReference>
<dbReference type="PROSITE" id="PS50815">
    <property type="entry name" value="HORMA"/>
    <property type="match status" value="1"/>
</dbReference>
<reference key="1">
    <citation type="submission" date="2006-10" db="EMBL/GenBank/DDBJ databases">
        <authorList>
            <consortium name="Sanger Xenopus tropicalis EST/cDNA project"/>
        </authorList>
    </citation>
    <scope>NUCLEOTIDE SEQUENCE [LARGE SCALE MRNA]</scope>
    <source>
        <tissue>Egg</tissue>
    </source>
</reference>
<evidence type="ECO:0000250" key="1"/>
<evidence type="ECO:0000255" key="2">
    <source>
        <dbReference type="PROSITE-ProRule" id="PRU00109"/>
    </source>
</evidence>
<sequence length="211" mass="24401">MTTLTRQDLNFGQVVADILCEFLEVAVHLILYVREVYPIGIFQKRKKYNVPVQMSCHPELNRYIQDTLHCVKPLIEKNDVEKVVVVILDKEHHPVERFVFEIAQPPLLSISSDSLLSHVEQLLRAFILKISVCDAVLDNNPPGCTFTLLVHTREAATRNMEKIQVIKDFPWILADEQDVHMQEPRLIPLKTMTSDILKMQLYVEERAQKST</sequence>
<keyword id="KW-0131">Cell cycle</keyword>
<keyword id="KW-0132">Cell division</keyword>
<keyword id="KW-0963">Cytoplasm</keyword>
<keyword id="KW-0206">Cytoskeleton</keyword>
<keyword id="KW-0227">DNA damage</keyword>
<keyword id="KW-0498">Mitosis</keyword>
<keyword id="KW-0539">Nucleus</keyword>
<keyword id="KW-1185">Reference proteome</keyword>
<keyword id="KW-0804">Transcription</keyword>
<keyword id="KW-0805">Transcription regulation</keyword>
<protein>
    <recommendedName>
        <fullName>Mitotic spindle assembly checkpoint protein MAD2B</fullName>
    </recommendedName>
    <alternativeName>
        <fullName>Mitotic arrest deficient 2-like protein 2</fullName>
        <shortName>MAD2-like protein 2</shortName>
    </alternativeName>
</protein>
<organism>
    <name type="scientific">Xenopus tropicalis</name>
    <name type="common">Western clawed frog</name>
    <name type="synonym">Silurana tropicalis</name>
    <dbReference type="NCBI Taxonomy" id="8364"/>
    <lineage>
        <taxon>Eukaryota</taxon>
        <taxon>Metazoa</taxon>
        <taxon>Chordata</taxon>
        <taxon>Craniata</taxon>
        <taxon>Vertebrata</taxon>
        <taxon>Euteleostomi</taxon>
        <taxon>Amphibia</taxon>
        <taxon>Batrachia</taxon>
        <taxon>Anura</taxon>
        <taxon>Pipoidea</taxon>
        <taxon>Pipidae</taxon>
        <taxon>Xenopodinae</taxon>
        <taxon>Xenopus</taxon>
        <taxon>Silurana</taxon>
    </lineage>
</organism>
<proteinExistence type="evidence at transcript level"/>
<accession>Q28H85</accession>